<proteinExistence type="inferred from homology"/>
<geneLocation type="mitochondrion"/>
<organism>
    <name type="scientific">Notoryctes typhlops</name>
    <name type="common">Southern marsupial mole</name>
    <name type="synonym">Psammoryctes typhlops</name>
    <dbReference type="NCBI Taxonomy" id="37699"/>
    <lineage>
        <taxon>Eukaryota</taxon>
        <taxon>Metazoa</taxon>
        <taxon>Chordata</taxon>
        <taxon>Craniata</taxon>
        <taxon>Vertebrata</taxon>
        <taxon>Euteleostomi</taxon>
        <taxon>Mammalia</taxon>
        <taxon>Metatheria</taxon>
        <taxon>Notoryctemorphia</taxon>
        <taxon>Notoryctidae</taxon>
        <taxon>Notoryctes</taxon>
    </lineage>
</organism>
<comment type="function">
    <text evidence="1">Core subunit of the mitochondrial membrane respiratory chain NADH dehydrogenase (Complex I) that is believed to belong to the minimal assembly required for catalysis. Complex I functions in the transfer of electrons from NADH to the respiratory chain. The immediate electron acceptor for the enzyme is believed to be ubiquinone (By similarity).</text>
</comment>
<comment type="catalytic activity">
    <reaction>
        <text>a ubiquinone + NADH + 5 H(+)(in) = a ubiquinol + NAD(+) + 4 H(+)(out)</text>
        <dbReference type="Rhea" id="RHEA:29091"/>
        <dbReference type="Rhea" id="RHEA-COMP:9565"/>
        <dbReference type="Rhea" id="RHEA-COMP:9566"/>
        <dbReference type="ChEBI" id="CHEBI:15378"/>
        <dbReference type="ChEBI" id="CHEBI:16389"/>
        <dbReference type="ChEBI" id="CHEBI:17976"/>
        <dbReference type="ChEBI" id="CHEBI:57540"/>
        <dbReference type="ChEBI" id="CHEBI:57945"/>
        <dbReference type="EC" id="7.1.1.2"/>
    </reaction>
</comment>
<comment type="subcellular location">
    <subcellularLocation>
        <location evidence="1">Mitochondrion inner membrane</location>
        <topology evidence="1">Multi-pass membrane protein</topology>
    </subcellularLocation>
</comment>
<comment type="similarity">
    <text evidence="3">Belongs to the complex I subunit 1 family.</text>
</comment>
<name>NU1M_NOTTY</name>
<dbReference type="EC" id="7.1.1.2"/>
<dbReference type="EMBL" id="AB011226">
    <property type="protein sequence ID" value="BAA32118.1"/>
    <property type="molecule type" value="Genomic_DNA"/>
</dbReference>
<dbReference type="SMR" id="O78709"/>
<dbReference type="GO" id="GO:0005743">
    <property type="term" value="C:mitochondrial inner membrane"/>
    <property type="evidence" value="ECO:0007669"/>
    <property type="project" value="UniProtKB-SubCell"/>
</dbReference>
<dbReference type="GO" id="GO:0008137">
    <property type="term" value="F:NADH dehydrogenase (ubiquinone) activity"/>
    <property type="evidence" value="ECO:0007669"/>
    <property type="project" value="UniProtKB-EC"/>
</dbReference>
<dbReference type="GO" id="GO:0009060">
    <property type="term" value="P:aerobic respiration"/>
    <property type="evidence" value="ECO:0007669"/>
    <property type="project" value="TreeGrafter"/>
</dbReference>
<dbReference type="HAMAP" id="MF_01350">
    <property type="entry name" value="NDH1_NuoH"/>
    <property type="match status" value="1"/>
</dbReference>
<dbReference type="InterPro" id="IPR001694">
    <property type="entry name" value="NADH_UbQ_OxRdtase_su1/FPO"/>
</dbReference>
<dbReference type="InterPro" id="IPR018086">
    <property type="entry name" value="NADH_UbQ_OxRdtase_su1_CS"/>
</dbReference>
<dbReference type="PANTHER" id="PTHR11432">
    <property type="entry name" value="NADH DEHYDROGENASE SUBUNIT 1"/>
    <property type="match status" value="1"/>
</dbReference>
<dbReference type="PANTHER" id="PTHR11432:SF3">
    <property type="entry name" value="NADH-UBIQUINONE OXIDOREDUCTASE CHAIN 1"/>
    <property type="match status" value="1"/>
</dbReference>
<dbReference type="Pfam" id="PF00146">
    <property type="entry name" value="NADHdh"/>
    <property type="match status" value="1"/>
</dbReference>
<dbReference type="PROSITE" id="PS00667">
    <property type="entry name" value="COMPLEX1_ND1_1"/>
    <property type="match status" value="1"/>
</dbReference>
<dbReference type="PROSITE" id="PS00668">
    <property type="entry name" value="COMPLEX1_ND1_2"/>
    <property type="match status" value="1"/>
</dbReference>
<protein>
    <recommendedName>
        <fullName>NADH-ubiquinone oxidoreductase chain 1</fullName>
        <ecNumber>7.1.1.2</ecNumber>
    </recommendedName>
    <alternativeName>
        <fullName>NADH dehydrogenase subunit 1</fullName>
    </alternativeName>
</protein>
<accession>O78709</accession>
<feature type="chain" id="PRO_0000117437" description="NADH-ubiquinone oxidoreductase chain 1">
    <location>
        <begin position="1"/>
        <end position="318"/>
    </location>
</feature>
<feature type="transmembrane region" description="Helical" evidence="2">
    <location>
        <begin position="3"/>
        <end position="23"/>
    </location>
</feature>
<feature type="transmembrane region" description="Helical" evidence="2">
    <location>
        <begin position="68"/>
        <end position="88"/>
    </location>
</feature>
<feature type="transmembrane region" description="Helical" evidence="2">
    <location>
        <begin position="100"/>
        <end position="120"/>
    </location>
</feature>
<feature type="transmembrane region" description="Helical" evidence="2">
    <location>
        <begin position="136"/>
        <end position="156"/>
    </location>
</feature>
<feature type="transmembrane region" description="Helical" evidence="2">
    <location>
        <begin position="172"/>
        <end position="192"/>
    </location>
</feature>
<feature type="transmembrane region" description="Helical" evidence="2">
    <location>
        <begin position="223"/>
        <end position="243"/>
    </location>
</feature>
<feature type="transmembrane region" description="Helical" evidence="2">
    <location>
        <begin position="253"/>
        <end position="273"/>
    </location>
</feature>
<feature type="transmembrane region" description="Helical" evidence="2">
    <location>
        <begin position="293"/>
        <end position="313"/>
    </location>
</feature>
<reference key="1">
    <citation type="journal article" date="1998" name="J. Mol. Evol.">
        <title>Conflict among individual mitochondrial proteins in resolving the phylogeny of eutherian orders.</title>
        <authorList>
            <person name="Cao Y."/>
            <person name="Janke A."/>
            <person name="Waddell P.J."/>
            <person name="Westerman M."/>
            <person name="Takenaka O."/>
            <person name="Murata S."/>
            <person name="Okada N."/>
            <person name="Paeaebo S."/>
            <person name="Hasegawa M."/>
        </authorList>
    </citation>
    <scope>NUCLEOTIDE SEQUENCE [GENOMIC DNA]</scope>
    <source>
        <tissue>Liver</tissue>
    </source>
</reference>
<sequence length="318" mass="35921">MFIMNLLLYIIPILLAVAFLTLIERKVLGYMQFRKGPNVVGPYGLLQPFADAVKLFTKEPLHPLSSSVLMYTLAPTLALTLALTIWTPLPMPYSLVDLNLGLLFILALSSLSVYSILWSGWASNSKYPLAGALRAVAQTISYEVTLAIILLSIMMINGSFTLKNLIITQENMWLIVPAWPLAMMWFISTLAETNRAPFDLTEGESELVSGFNVEYTAGPFAMFFLAEYANIIIMNALTTMLFLGPSFNQDFTHVNTFTFMTKMMILTLTFLWVRASYPRFRYDQLMQLLWKNFLPMTLALCLWFISIPMALACVPPQI</sequence>
<gene>
    <name type="primary">MT-ND1</name>
    <name type="synonym">MTND1</name>
    <name type="synonym">NADH1</name>
    <name type="synonym">ND1</name>
</gene>
<evidence type="ECO:0000250" key="1"/>
<evidence type="ECO:0000255" key="2"/>
<evidence type="ECO:0000305" key="3"/>
<keyword id="KW-0249">Electron transport</keyword>
<keyword id="KW-0472">Membrane</keyword>
<keyword id="KW-0496">Mitochondrion</keyword>
<keyword id="KW-0999">Mitochondrion inner membrane</keyword>
<keyword id="KW-0520">NAD</keyword>
<keyword id="KW-0679">Respiratory chain</keyword>
<keyword id="KW-1278">Translocase</keyword>
<keyword id="KW-0812">Transmembrane</keyword>
<keyword id="KW-1133">Transmembrane helix</keyword>
<keyword id="KW-0813">Transport</keyword>
<keyword id="KW-0830">Ubiquinone</keyword>